<evidence type="ECO:0000250" key="1">
    <source>
        <dbReference type="UniProtKB" id="P08046"/>
    </source>
</evidence>
<evidence type="ECO:0000250" key="2">
    <source>
        <dbReference type="UniProtKB" id="P18146"/>
    </source>
</evidence>
<evidence type="ECO:0000255" key="3">
    <source>
        <dbReference type="PROSITE-ProRule" id="PRU00042"/>
    </source>
</evidence>
<evidence type="ECO:0000303" key="4">
    <source>
    </source>
</evidence>
<evidence type="ECO:0000305" key="5"/>
<name>EGR1_CHICK</name>
<accession>O73691</accession>
<protein>
    <recommendedName>
        <fullName>Early growth response protein 1</fullName>
        <shortName>EGR-1</shortName>
    </recommendedName>
    <alternativeName>
        <fullName evidence="4">Zinc finger protein ZENK</fullName>
    </alternativeName>
</protein>
<gene>
    <name type="primary">EGR1</name>
    <name evidence="4" type="synonym">ZENK</name>
</gene>
<reference key="1">
    <citation type="journal article" date="1998" name="Mol. Biol. Evol.">
        <title>Evolutionary conservation of the immediate-early gene ZENK.</title>
        <authorList>
            <person name="Long K.D."/>
            <person name="Salbaum J.M."/>
        </authorList>
    </citation>
    <scope>NUCLEOTIDE SEQUENCE [GENOMIC DNA]</scope>
</reference>
<sequence>CDRRFSRSDELTRHIRIHTGQKPFQCRICMRNFSRSDHLTTHIRTHTGEKPFACDICGRKFARSDERKRHTKIHLRQKDKKVEKAASVSATSSSVAAYSSSVATSYSSSIATTYPSSVRTVYSSPASSSYPSPAHTTFPSPSIATTYSSGTATFQTQVATSFPSPGVTNNFSSQVTSALSDMTSTFSPRTIEIC</sequence>
<comment type="function">
    <text evidence="1 2">Transcriptional regulator. Recognizes and binds to the DNA sequence 5'-GCG(T/G)GGGCG-3'(EGR-site) in the promoter region of target genes (By similarity). Binds double-stranded target DNA, irrespective of the cytosine methylation status (By similarity). Regulates the transcription of numerous target genes, and thereby plays an important role in regulating the response to growth factors, DNA damage, and ischemia. Plays a role in the regulation of cell survival, proliferation and cell death. Mediates responses to ischemia and hypoxia; regulates the expression of proteins that are involved in inflammatory processes (By similarity). Plays a role in regulating the expression of circadian clock genes (By similarity).</text>
</comment>
<comment type="subcellular location">
    <subcellularLocation>
        <location evidence="2">Nucleus</location>
    </subcellularLocation>
    <subcellularLocation>
        <location evidence="2">Cytoplasm</location>
    </subcellularLocation>
</comment>
<comment type="domain">
    <text evidence="2">Binds to DNA motifs with the sequence 5'-GCG(T/G)GGGCG-3' via its C2H2-type zinc fingers. The first, most N-terminal zinc finger binds to the 3'-GCG motif, the middle zinc finger interacts with the central TGG motif, and the C-terminal zinc finger binds to the 5'-GCG motif. Binds double-stranded target DNA, irrespective of the cytosine methylation status. Has reduced affinity for target DNA where the cytosines have been oxidized to 5-hydroxymethylcytosine. Does not bind target DNA where the cytosines have been oxidized to 5-formylcytosine or 5-carboxylcytosine.</text>
</comment>
<comment type="similarity">
    <text evidence="5">Belongs to the EGR C2H2-type zinc-finger protein family.</text>
</comment>
<dbReference type="EMBL" id="AF026082">
    <property type="protein sequence ID" value="AAC12266.1"/>
    <property type="molecule type" value="Genomic_DNA"/>
</dbReference>
<dbReference type="BMRB" id="O73691"/>
<dbReference type="SMR" id="O73691"/>
<dbReference type="STRING" id="9031.ENSGALP00000012417"/>
<dbReference type="PaxDb" id="9031-ENSGALP00000012417"/>
<dbReference type="VEuPathDB" id="HostDB:geneid_373931"/>
<dbReference type="eggNOG" id="KOG1721">
    <property type="taxonomic scope" value="Eukaryota"/>
</dbReference>
<dbReference type="HOGENOM" id="CLU_043235_2_0_1"/>
<dbReference type="InParanoid" id="O73691"/>
<dbReference type="OrthoDB" id="10018191at2759"/>
<dbReference type="Proteomes" id="UP000000539">
    <property type="component" value="Unassembled WGS sequence"/>
</dbReference>
<dbReference type="GO" id="GO:0005737">
    <property type="term" value="C:cytoplasm"/>
    <property type="evidence" value="ECO:0000250"/>
    <property type="project" value="UniProtKB"/>
</dbReference>
<dbReference type="GO" id="GO:0005654">
    <property type="term" value="C:nucleoplasm"/>
    <property type="evidence" value="ECO:0000247"/>
    <property type="project" value="AgBase"/>
</dbReference>
<dbReference type="GO" id="GO:0005634">
    <property type="term" value="C:nucleus"/>
    <property type="evidence" value="ECO:0000250"/>
    <property type="project" value="UniProtKB"/>
</dbReference>
<dbReference type="GO" id="GO:0003677">
    <property type="term" value="F:DNA binding"/>
    <property type="evidence" value="ECO:0000247"/>
    <property type="project" value="AgBase"/>
</dbReference>
<dbReference type="GO" id="GO:0003700">
    <property type="term" value="F:DNA-binding transcription factor activity"/>
    <property type="evidence" value="ECO:0000247"/>
    <property type="project" value="AgBase"/>
</dbReference>
<dbReference type="GO" id="GO:0000981">
    <property type="term" value="F:DNA-binding transcription factor activity, RNA polymerase II-specific"/>
    <property type="evidence" value="ECO:0000318"/>
    <property type="project" value="GO_Central"/>
</dbReference>
<dbReference type="GO" id="GO:0010385">
    <property type="term" value="F:double-stranded methylated DNA binding"/>
    <property type="evidence" value="ECO:0000250"/>
    <property type="project" value="UniProtKB"/>
</dbReference>
<dbReference type="GO" id="GO:0044729">
    <property type="term" value="F:hemi-methylated DNA-binding"/>
    <property type="evidence" value="ECO:0000250"/>
    <property type="project" value="UniProtKB"/>
</dbReference>
<dbReference type="GO" id="GO:0035035">
    <property type="term" value="F:histone acetyltransferase binding"/>
    <property type="evidence" value="ECO:0000247"/>
    <property type="project" value="AgBase"/>
</dbReference>
<dbReference type="GO" id="GO:1990841">
    <property type="term" value="F:promoter-specific chromatin binding"/>
    <property type="evidence" value="ECO:0000250"/>
    <property type="project" value="UniProtKB"/>
</dbReference>
<dbReference type="GO" id="GO:0000978">
    <property type="term" value="F:RNA polymerase II cis-regulatory region sequence-specific DNA binding"/>
    <property type="evidence" value="ECO:0000318"/>
    <property type="project" value="GO_Central"/>
</dbReference>
<dbReference type="GO" id="GO:0000977">
    <property type="term" value="F:RNA polymerase II transcription regulatory region sequence-specific DNA binding"/>
    <property type="evidence" value="ECO:0000247"/>
    <property type="project" value="AgBase"/>
</dbReference>
<dbReference type="GO" id="GO:0043565">
    <property type="term" value="F:sequence-specific DNA binding"/>
    <property type="evidence" value="ECO:0000247"/>
    <property type="project" value="AgBase"/>
</dbReference>
<dbReference type="GO" id="GO:0000976">
    <property type="term" value="F:transcription cis-regulatory region binding"/>
    <property type="evidence" value="ECO:0000247"/>
    <property type="project" value="AgBase"/>
</dbReference>
<dbReference type="GO" id="GO:0008270">
    <property type="term" value="F:zinc ion binding"/>
    <property type="evidence" value="ECO:0000250"/>
    <property type="project" value="UniProtKB"/>
</dbReference>
<dbReference type="GO" id="GO:0098759">
    <property type="term" value="P:cellular response to interleukin-8"/>
    <property type="evidence" value="ECO:0000250"/>
    <property type="project" value="AgBase"/>
</dbReference>
<dbReference type="GO" id="GO:0032922">
    <property type="term" value="P:circadian regulation of gene expression"/>
    <property type="evidence" value="ECO:0000250"/>
    <property type="project" value="UniProtKB"/>
</dbReference>
<dbReference type="GO" id="GO:0070498">
    <property type="term" value="P:interleukin-1-mediated signaling pathway"/>
    <property type="evidence" value="ECO:0000247"/>
    <property type="project" value="AgBase"/>
</dbReference>
<dbReference type="GO" id="GO:0045893">
    <property type="term" value="P:positive regulation of DNA-templated transcription"/>
    <property type="evidence" value="ECO:0000250"/>
    <property type="project" value="UniProtKB"/>
</dbReference>
<dbReference type="GO" id="GO:0045944">
    <property type="term" value="P:positive regulation of transcription by RNA polymerase II"/>
    <property type="evidence" value="ECO:0000250"/>
    <property type="project" value="UniProtKB"/>
</dbReference>
<dbReference type="GO" id="GO:0033233">
    <property type="term" value="P:regulation of protein sumoylation"/>
    <property type="evidence" value="ECO:0000247"/>
    <property type="project" value="AgBase"/>
</dbReference>
<dbReference type="GO" id="GO:0006357">
    <property type="term" value="P:regulation of transcription by RNA polymerase II"/>
    <property type="evidence" value="ECO:0000318"/>
    <property type="project" value="GO_Central"/>
</dbReference>
<dbReference type="GO" id="GO:0006366">
    <property type="term" value="P:transcription by RNA polymerase II"/>
    <property type="evidence" value="ECO:0000247"/>
    <property type="project" value="AgBase"/>
</dbReference>
<dbReference type="FunFam" id="3.30.160.60:FF:000769">
    <property type="entry name" value="Early growth response 2b"/>
    <property type="match status" value="1"/>
</dbReference>
<dbReference type="FunFam" id="3.30.160.60:FF:003460">
    <property type="entry name" value="Early growth response protein 1"/>
    <property type="match status" value="1"/>
</dbReference>
<dbReference type="FunFam" id="3.30.160.60:FF:000419">
    <property type="entry name" value="Early growth response protein 4"/>
    <property type="match status" value="1"/>
</dbReference>
<dbReference type="Gene3D" id="3.30.160.60">
    <property type="entry name" value="Classic Zinc Finger"/>
    <property type="match status" value="3"/>
</dbReference>
<dbReference type="InterPro" id="IPR021839">
    <property type="entry name" value="EGR1_C"/>
</dbReference>
<dbReference type="InterPro" id="IPR036236">
    <property type="entry name" value="Znf_C2H2_sf"/>
</dbReference>
<dbReference type="InterPro" id="IPR013087">
    <property type="entry name" value="Znf_C2H2_type"/>
</dbReference>
<dbReference type="PANTHER" id="PTHR23235:SF42">
    <property type="entry name" value="EARLY GROWTH RESPONSE PROTEIN 1"/>
    <property type="match status" value="1"/>
</dbReference>
<dbReference type="PANTHER" id="PTHR23235">
    <property type="entry name" value="KRUEPPEL-LIKE TRANSCRIPTION FACTOR"/>
    <property type="match status" value="1"/>
</dbReference>
<dbReference type="Pfam" id="PF11914">
    <property type="entry name" value="DUF3432"/>
    <property type="match status" value="1"/>
</dbReference>
<dbReference type="Pfam" id="PF00096">
    <property type="entry name" value="zf-C2H2"/>
    <property type="match status" value="3"/>
</dbReference>
<dbReference type="SMART" id="SM00355">
    <property type="entry name" value="ZnF_C2H2"/>
    <property type="match status" value="3"/>
</dbReference>
<dbReference type="SUPFAM" id="SSF57667">
    <property type="entry name" value="beta-beta-alpha zinc fingers"/>
    <property type="match status" value="2"/>
</dbReference>
<dbReference type="PROSITE" id="PS00028">
    <property type="entry name" value="ZINC_FINGER_C2H2_1"/>
    <property type="match status" value="2"/>
</dbReference>
<dbReference type="PROSITE" id="PS50157">
    <property type="entry name" value="ZINC_FINGER_C2H2_2"/>
    <property type="match status" value="3"/>
</dbReference>
<organism>
    <name type="scientific">Gallus gallus</name>
    <name type="common">Chicken</name>
    <dbReference type="NCBI Taxonomy" id="9031"/>
    <lineage>
        <taxon>Eukaryota</taxon>
        <taxon>Metazoa</taxon>
        <taxon>Chordata</taxon>
        <taxon>Craniata</taxon>
        <taxon>Vertebrata</taxon>
        <taxon>Euteleostomi</taxon>
        <taxon>Archelosauria</taxon>
        <taxon>Archosauria</taxon>
        <taxon>Dinosauria</taxon>
        <taxon>Saurischia</taxon>
        <taxon>Theropoda</taxon>
        <taxon>Coelurosauria</taxon>
        <taxon>Aves</taxon>
        <taxon>Neognathae</taxon>
        <taxon>Galloanserae</taxon>
        <taxon>Galliformes</taxon>
        <taxon>Phasianidae</taxon>
        <taxon>Phasianinae</taxon>
        <taxon>Gallus</taxon>
    </lineage>
</organism>
<proteinExistence type="inferred from homology"/>
<feature type="chain" id="PRO_0000047112" description="Early growth response protein 1">
    <location>
        <begin position="1" status="less than"/>
        <end position="194"/>
    </location>
</feature>
<feature type="zinc finger region" description="C2H2-type 1" evidence="3">
    <location>
        <begin position="1" status="less than"/>
        <end position="18"/>
    </location>
</feature>
<feature type="zinc finger region" description="C2H2-type 2" evidence="3">
    <location>
        <begin position="24"/>
        <end position="46"/>
    </location>
</feature>
<feature type="zinc finger region" description="C2H2-type 3" evidence="3">
    <location>
        <begin position="52"/>
        <end position="74"/>
    </location>
</feature>
<feature type="site" description="Interaction with DNA" evidence="1">
    <location>
        <position position="3"/>
    </location>
</feature>
<feature type="site" description="Interaction with DNA" evidence="1">
    <location>
        <position position="7"/>
    </location>
</feature>
<feature type="site" description="Interaction with DNA" evidence="2">
    <location>
        <position position="13"/>
    </location>
</feature>
<feature type="site" description="Interaction with DNA" evidence="1">
    <location>
        <position position="31"/>
    </location>
</feature>
<feature type="site" description="Interaction with DNA" evidence="2">
    <location>
        <position position="35"/>
    </location>
</feature>
<feature type="site" description="Interaction with DNA" evidence="2">
    <location>
        <position position="59"/>
    </location>
</feature>
<feature type="site" description="Interaction with DNA" evidence="2">
    <location>
        <position position="63"/>
    </location>
</feature>
<feature type="site" description="Interaction with DNA" evidence="2">
    <location>
        <position position="69"/>
    </location>
</feature>
<feature type="non-terminal residue">
    <location>
        <position position="1"/>
    </location>
</feature>
<keyword id="KW-0010">Activator</keyword>
<keyword id="KW-0090">Biological rhythms</keyword>
<keyword id="KW-0963">Cytoplasm</keyword>
<keyword id="KW-0238">DNA-binding</keyword>
<keyword id="KW-0479">Metal-binding</keyword>
<keyword id="KW-0539">Nucleus</keyword>
<keyword id="KW-1185">Reference proteome</keyword>
<keyword id="KW-0677">Repeat</keyword>
<keyword id="KW-0804">Transcription</keyword>
<keyword id="KW-0805">Transcription regulation</keyword>
<keyword id="KW-0862">Zinc</keyword>
<keyword id="KW-0863">Zinc-finger</keyword>